<comment type="function">
    <text evidence="3">Involved in beta-(1--&gt;2)glucan export. Its export to the periplasmic space is required to exert its action as a virulence factor. Transmembrane domains (TMD) form a pore in the inner membrane and the ATP-binding domain (NBD) is responsible for energy generation (Probable).</text>
</comment>
<comment type="catalytic activity">
    <reaction evidence="1">
        <text>[(1-&gt;2)-beta-D-glucosyl](n)(in) + ATP + H2O = [(1-&gt;2)-beta-D-glucosyl](n)(out) + ADP + phosphate + H(+)</text>
        <dbReference type="Rhea" id="RHEA:18453"/>
        <dbReference type="Rhea" id="RHEA-COMP:11881"/>
        <dbReference type="ChEBI" id="CHEBI:15377"/>
        <dbReference type="ChEBI" id="CHEBI:15378"/>
        <dbReference type="ChEBI" id="CHEBI:27517"/>
        <dbReference type="ChEBI" id="CHEBI:30616"/>
        <dbReference type="ChEBI" id="CHEBI:43474"/>
        <dbReference type="ChEBI" id="CHEBI:456216"/>
        <dbReference type="EC" id="7.5.2.3"/>
    </reaction>
</comment>
<comment type="subunit">
    <text evidence="1">Homodimer.</text>
</comment>
<comment type="interaction">
    <interactant intactId="EBI-11509336">
        <id>Q2YQ73</id>
    </interactant>
    <interactant intactId="EBI-11509311">
        <id>Q2YNV7</id>
        <label>BAB1_0108</label>
    </interactant>
    <organismsDiffer>false</organismsDiffer>
    <experiments>5</experiments>
</comment>
<comment type="interaction">
    <interactant intactId="EBI-11509336">
        <id>Q2YQ73</id>
    </interactant>
    <interactant intactId="EBI-11509356">
        <id>Q2YRC8</id>
        <label>BAB1_1718</label>
    </interactant>
    <organismsDiffer>false</organismsDiffer>
    <experiments>4</experiments>
</comment>
<comment type="subcellular location">
    <subcellularLocation>
        <location evidence="1 2">Cell inner membrane</location>
        <topology evidence="1 2">Multi-pass membrane protein</topology>
    </subcellularLocation>
</comment>
<comment type="domain">
    <text>In NdvA the ATP-binding domain (NBD) and the transmembrane domain (TMD) are fused.</text>
</comment>
<comment type="similarity">
    <text evidence="1">Belongs to the ABC transporter superfamily. Beta-(1--&gt;2)glucan exporter (TC 3.A.1.108.1) family.</text>
</comment>
<dbReference type="EC" id="7.5.2.3" evidence="1"/>
<dbReference type="EMBL" id="AY237159">
    <property type="protein sequence ID" value="AAO84919.1"/>
    <property type="molecule type" value="Genomic_DNA"/>
</dbReference>
<dbReference type="EMBL" id="AM040264">
    <property type="protein sequence ID" value="CAJ10973.1"/>
    <property type="molecule type" value="Genomic_DNA"/>
</dbReference>
<dbReference type="PDB" id="7ZNU">
    <property type="method" value="EM"/>
    <property type="resolution" value="4.00 A"/>
    <property type="chains" value="A/B=1-599"/>
</dbReference>
<dbReference type="PDB" id="7ZO8">
    <property type="method" value="EM"/>
    <property type="resolution" value="3.60 A"/>
    <property type="chains" value="A/B=1-599"/>
</dbReference>
<dbReference type="PDB" id="7ZO9">
    <property type="method" value="EM"/>
    <property type="resolution" value="3.50 A"/>
    <property type="chains" value="A/B=1-599"/>
</dbReference>
<dbReference type="PDB" id="7ZOA">
    <property type="method" value="EM"/>
    <property type="resolution" value="4.00 A"/>
    <property type="chains" value="A/B=1-599"/>
</dbReference>
<dbReference type="PDBsum" id="7ZNU"/>
<dbReference type="PDBsum" id="7ZO8"/>
<dbReference type="PDBsum" id="7ZO9"/>
<dbReference type="PDBsum" id="7ZOA"/>
<dbReference type="EMDB" id="EMD-14814"/>
<dbReference type="EMDB" id="EMD-14843"/>
<dbReference type="EMDB" id="EMD-14844"/>
<dbReference type="EMDB" id="EMD-14845"/>
<dbReference type="SMR" id="Q2YQ73"/>
<dbReference type="IntAct" id="Q2YQ73">
    <property type="interactions" value="2"/>
</dbReference>
<dbReference type="STRING" id="359391.BAB1_1017"/>
<dbReference type="KEGG" id="bmf:BAB1_1017"/>
<dbReference type="PATRIC" id="fig|359391.11.peg.1730"/>
<dbReference type="HOGENOM" id="CLU_000604_84_3_5"/>
<dbReference type="Proteomes" id="UP000002719">
    <property type="component" value="Chromosome I"/>
</dbReference>
<dbReference type="GO" id="GO:0005886">
    <property type="term" value="C:plasma membrane"/>
    <property type="evidence" value="ECO:0007669"/>
    <property type="project" value="UniProtKB-SubCell"/>
</dbReference>
<dbReference type="GO" id="GO:0015441">
    <property type="term" value="F:ABC-type beta-glucan transporter activity"/>
    <property type="evidence" value="ECO:0007669"/>
    <property type="project" value="UniProtKB-EC"/>
</dbReference>
<dbReference type="GO" id="GO:0005524">
    <property type="term" value="F:ATP binding"/>
    <property type="evidence" value="ECO:0007669"/>
    <property type="project" value="UniProtKB-KW"/>
</dbReference>
<dbReference type="GO" id="GO:0016887">
    <property type="term" value="F:ATP hydrolysis activity"/>
    <property type="evidence" value="ECO:0007669"/>
    <property type="project" value="InterPro"/>
</dbReference>
<dbReference type="GO" id="GO:0034040">
    <property type="term" value="F:ATPase-coupled lipid transmembrane transporter activity"/>
    <property type="evidence" value="ECO:0007669"/>
    <property type="project" value="TreeGrafter"/>
</dbReference>
<dbReference type="CDD" id="cd18562">
    <property type="entry name" value="ABC_6TM_NdvA_beta-glucan_exporter_like"/>
    <property type="match status" value="1"/>
</dbReference>
<dbReference type="FunFam" id="1.20.1560.10:FF:000182">
    <property type="entry name" value="Beta-(1--&gt;2)glucan export ATP-binding/permease protein NdvA"/>
    <property type="match status" value="1"/>
</dbReference>
<dbReference type="FunFam" id="3.40.50.300:FF:000221">
    <property type="entry name" value="Multidrug ABC transporter ATP-binding protein"/>
    <property type="match status" value="1"/>
</dbReference>
<dbReference type="Gene3D" id="1.20.1560.10">
    <property type="entry name" value="ABC transporter type 1, transmembrane domain"/>
    <property type="match status" value="1"/>
</dbReference>
<dbReference type="Gene3D" id="3.40.50.300">
    <property type="entry name" value="P-loop containing nucleotide triphosphate hydrolases"/>
    <property type="match status" value="1"/>
</dbReference>
<dbReference type="InterPro" id="IPR003593">
    <property type="entry name" value="AAA+_ATPase"/>
</dbReference>
<dbReference type="InterPro" id="IPR011527">
    <property type="entry name" value="ABC1_TM_dom"/>
</dbReference>
<dbReference type="InterPro" id="IPR036640">
    <property type="entry name" value="ABC1_TM_sf"/>
</dbReference>
<dbReference type="InterPro" id="IPR003439">
    <property type="entry name" value="ABC_transporter-like_ATP-bd"/>
</dbReference>
<dbReference type="InterPro" id="IPR017871">
    <property type="entry name" value="ABC_transporter-like_CS"/>
</dbReference>
<dbReference type="InterPro" id="IPR005896">
    <property type="entry name" value="NdvA"/>
</dbReference>
<dbReference type="InterPro" id="IPR027417">
    <property type="entry name" value="P-loop_NTPase"/>
</dbReference>
<dbReference type="InterPro" id="IPR039421">
    <property type="entry name" value="Type_1_exporter"/>
</dbReference>
<dbReference type="NCBIfam" id="TIGR01192">
    <property type="entry name" value="chvA"/>
    <property type="match status" value="1"/>
</dbReference>
<dbReference type="NCBIfam" id="NF010178">
    <property type="entry name" value="PRK13657.1"/>
    <property type="match status" value="1"/>
</dbReference>
<dbReference type="PANTHER" id="PTHR24221">
    <property type="entry name" value="ATP-BINDING CASSETTE SUB-FAMILY B"/>
    <property type="match status" value="1"/>
</dbReference>
<dbReference type="PANTHER" id="PTHR24221:SF654">
    <property type="entry name" value="ATP-BINDING CASSETTE SUB-FAMILY B MEMBER 6"/>
    <property type="match status" value="1"/>
</dbReference>
<dbReference type="Pfam" id="PF00664">
    <property type="entry name" value="ABC_membrane"/>
    <property type="match status" value="1"/>
</dbReference>
<dbReference type="Pfam" id="PF00005">
    <property type="entry name" value="ABC_tran"/>
    <property type="match status" value="1"/>
</dbReference>
<dbReference type="SMART" id="SM00382">
    <property type="entry name" value="AAA"/>
    <property type="match status" value="1"/>
</dbReference>
<dbReference type="SUPFAM" id="SSF90123">
    <property type="entry name" value="ABC transporter transmembrane region"/>
    <property type="match status" value="1"/>
</dbReference>
<dbReference type="SUPFAM" id="SSF52540">
    <property type="entry name" value="P-loop containing nucleoside triphosphate hydrolases"/>
    <property type="match status" value="1"/>
</dbReference>
<dbReference type="PROSITE" id="PS50929">
    <property type="entry name" value="ABC_TM1F"/>
    <property type="match status" value="1"/>
</dbReference>
<dbReference type="PROSITE" id="PS00211">
    <property type="entry name" value="ABC_TRANSPORTER_1"/>
    <property type="match status" value="1"/>
</dbReference>
<dbReference type="PROSITE" id="PS50893">
    <property type="entry name" value="ABC_TRANSPORTER_2"/>
    <property type="match status" value="1"/>
</dbReference>
<dbReference type="PROSITE" id="PS51317">
    <property type="entry name" value="NDVA"/>
    <property type="match status" value="1"/>
</dbReference>
<reference key="1">
    <citation type="journal article" date="2004" name="Infect. Immun.">
        <title>Molecular cloning and characterization of cgt, the Brucella abortus cyclic beta-1,2-glucan transporter gene, and its role in virulence.</title>
        <authorList>
            <person name="Roset M.S."/>
            <person name="Ciocchini A.E."/>
            <person name="Ugalde R.A."/>
            <person name="Inon de Iannino N."/>
        </authorList>
    </citation>
    <scope>NUCLEOTIDE SEQUENCE [GENOMIC DNA]</scope>
    <scope>FUNCTION IN BETA-(1-&gt;2)GLUCAN TRANSPORT</scope>
    <scope>SUBCELLULAR LOCATION</scope>
</reference>
<reference key="2">
    <citation type="journal article" date="2005" name="Infect. Immun.">
        <title>Whole-genome analyses of speciation events in pathogenic Brucellae.</title>
        <authorList>
            <person name="Chain P.S."/>
            <person name="Comerci D.J."/>
            <person name="Tolmasky M.E."/>
            <person name="Larimer F.W."/>
            <person name="Malfatti S.A."/>
            <person name="Vergez L.M."/>
            <person name="Aguero F."/>
            <person name="Land M.L."/>
            <person name="Ugalde R.A."/>
            <person name="Garcia E."/>
        </authorList>
    </citation>
    <scope>NUCLEOTIDE SEQUENCE [LARGE SCALE GENOMIC DNA]</scope>
    <source>
        <strain>2308</strain>
    </source>
</reference>
<keyword id="KW-0002">3D-structure</keyword>
<keyword id="KW-0067">ATP-binding</keyword>
<keyword id="KW-0997">Cell inner membrane</keyword>
<keyword id="KW-1003">Cell membrane</keyword>
<keyword id="KW-0472">Membrane</keyword>
<keyword id="KW-0547">Nucleotide-binding</keyword>
<keyword id="KW-1185">Reference proteome</keyword>
<keyword id="KW-0762">Sugar transport</keyword>
<keyword id="KW-1278">Translocase</keyword>
<keyword id="KW-0812">Transmembrane</keyword>
<keyword id="KW-1133">Transmembrane helix</keyword>
<keyword id="KW-0813">Transport</keyword>
<accession>Q2YQ73</accession>
<accession>Q57DD0</accession>
<accession>Q844Y8</accession>
<name>NDVA_BRUA2</name>
<evidence type="ECO:0000255" key="1">
    <source>
        <dbReference type="HAMAP-Rule" id="MF_01728"/>
    </source>
</evidence>
<evidence type="ECO:0000269" key="2">
    <source>
    </source>
</evidence>
<evidence type="ECO:0000305" key="3">
    <source>
    </source>
</evidence>
<evidence type="ECO:0007829" key="4">
    <source>
        <dbReference type="PDB" id="7ZO9"/>
    </source>
</evidence>
<proteinExistence type="evidence at protein level"/>
<protein>
    <recommendedName>
        <fullName evidence="1">Beta-(1--&gt;2)glucan export ATP-binding/permease protein NdvA</fullName>
        <ecNumber evidence="1">7.5.2.3</ecNumber>
    </recommendedName>
</protein>
<gene>
    <name evidence="1" type="primary">ndvA</name>
    <name type="synonym">cgt</name>
    <name type="ordered locus">BAB1_1017</name>
</gene>
<feature type="chain" id="PRO_0000290245" description="Beta-(1--&gt;2)glucan export ATP-binding/permease protein NdvA">
    <location>
        <begin position="1"/>
        <end position="599"/>
    </location>
</feature>
<feature type="transmembrane region" description="Helical" evidence="1">
    <location>
        <begin position="22"/>
        <end position="42"/>
    </location>
</feature>
<feature type="transmembrane region" description="Helical" evidence="1">
    <location>
        <begin position="55"/>
        <end position="75"/>
    </location>
</feature>
<feature type="transmembrane region" description="Helical" evidence="1">
    <location>
        <begin position="156"/>
        <end position="176"/>
    </location>
</feature>
<feature type="transmembrane region" description="Helical" evidence="1">
    <location>
        <begin position="248"/>
        <end position="268"/>
    </location>
</feature>
<feature type="transmembrane region" description="Helical" evidence="1">
    <location>
        <begin position="276"/>
        <end position="296"/>
    </location>
</feature>
<feature type="domain" description="ABC transmembrane type-1" evidence="1">
    <location>
        <begin position="21"/>
        <end position="301"/>
    </location>
</feature>
<feature type="domain" description="ABC transporter" evidence="1">
    <location>
        <begin position="335"/>
        <end position="569"/>
    </location>
</feature>
<feature type="binding site" evidence="1">
    <location>
        <begin position="368"/>
        <end position="375"/>
    </location>
    <ligand>
        <name>ATP</name>
        <dbReference type="ChEBI" id="CHEBI:30616"/>
    </ligand>
</feature>
<feature type="helix" evidence="4">
    <location>
        <begin position="2"/>
        <end position="14"/>
    </location>
</feature>
<feature type="helix" evidence="4">
    <location>
        <begin position="18"/>
        <end position="45"/>
    </location>
</feature>
<feature type="helix" evidence="4">
    <location>
        <begin position="57"/>
        <end position="100"/>
    </location>
</feature>
<feature type="helix" evidence="4">
    <location>
        <begin position="104"/>
        <end position="110"/>
    </location>
</feature>
<feature type="helix" evidence="4">
    <location>
        <begin position="114"/>
        <end position="153"/>
    </location>
</feature>
<feature type="helix" evidence="4">
    <location>
        <begin position="156"/>
        <end position="202"/>
    </location>
</feature>
<feature type="helix" evidence="4">
    <location>
        <begin position="205"/>
        <end position="209"/>
    </location>
</feature>
<feature type="turn" evidence="4">
    <location>
        <begin position="210"/>
        <end position="212"/>
    </location>
</feature>
<feature type="helix" evidence="4">
    <location>
        <begin position="214"/>
        <end position="230"/>
    </location>
</feature>
<feature type="helix" evidence="4">
    <location>
        <begin position="233"/>
        <end position="263"/>
    </location>
</feature>
<feature type="helix" evidence="4">
    <location>
        <begin position="271"/>
        <end position="313"/>
    </location>
</feature>
<feature type="strand" evidence="4">
    <location>
        <begin position="322"/>
        <end position="325"/>
    </location>
</feature>
<feature type="strand" evidence="4">
    <location>
        <begin position="335"/>
        <end position="341"/>
    </location>
</feature>
<feature type="strand" evidence="4">
    <location>
        <begin position="364"/>
        <end position="367"/>
    </location>
</feature>
<feature type="strand" evidence="4">
    <location>
        <begin position="372"/>
        <end position="374"/>
    </location>
</feature>
<feature type="helix" evidence="4">
    <location>
        <begin position="375"/>
        <end position="381"/>
    </location>
</feature>
<feature type="strand" evidence="4">
    <location>
        <begin position="388"/>
        <end position="394"/>
    </location>
</feature>
<feature type="helix" evidence="4">
    <location>
        <begin position="399"/>
        <end position="401"/>
    </location>
</feature>
<feature type="helix" evidence="4">
    <location>
        <begin position="404"/>
        <end position="409"/>
    </location>
</feature>
<feature type="strand" evidence="4">
    <location>
        <begin position="410"/>
        <end position="414"/>
    </location>
</feature>
<feature type="strand" evidence="4">
    <location>
        <begin position="422"/>
        <end position="424"/>
    </location>
</feature>
<feature type="helix" evidence="4">
    <location>
        <begin position="425"/>
        <end position="430"/>
    </location>
</feature>
<feature type="strand" evidence="4">
    <location>
        <begin position="432"/>
        <end position="436"/>
    </location>
</feature>
<feature type="helix" evidence="4">
    <location>
        <begin position="438"/>
        <end position="447"/>
    </location>
</feature>
<feature type="helix" evidence="4">
    <location>
        <begin position="450"/>
        <end position="454"/>
    </location>
</feature>
<feature type="strand" evidence="4">
    <location>
        <begin position="457"/>
        <end position="459"/>
    </location>
</feature>
<feature type="helix" evidence="4">
    <location>
        <begin position="467"/>
        <end position="469"/>
    </location>
</feature>
<feature type="helix" evidence="4">
    <location>
        <begin position="475"/>
        <end position="488"/>
    </location>
</feature>
<feature type="strand" evidence="4">
    <location>
        <begin position="491"/>
        <end position="497"/>
    </location>
</feature>
<feature type="turn" evidence="4">
    <location>
        <begin position="498"/>
        <end position="501"/>
    </location>
</feature>
<feature type="helix" evidence="4">
    <location>
        <begin position="504"/>
        <end position="518"/>
    </location>
</feature>
<feature type="strand" evidence="4">
    <location>
        <begin position="521"/>
        <end position="526"/>
    </location>
</feature>
<feature type="turn" evidence="4">
    <location>
        <begin position="530"/>
        <end position="535"/>
    </location>
</feature>
<feature type="strand" evidence="4">
    <location>
        <begin position="537"/>
        <end position="545"/>
    </location>
</feature>
<sequence length="599" mass="65951">MSLLKIYWRAMQYLAVERTATITMCVASVLVALVTLAEPVLFGRVIQSISDKGDIFSPLLMWAALGGFNIMAAVFVARGADRLAHRRRLGVMIDSYERLITMPLAWHQKRGTSNALHTLIRATDSLFTLWLEFMRQHLTTVVALATLIPVAMTMDMRMSLVLIVLGVIYVMIGQLVMRKTKDGQAAVEKHHHKLFEHVSDTISNVSVVQSYNRIASETQALRDYAKNLENAQFPVLNWWALASGLNRMASTFSMVVVLVLGAYFVTKGQMRVGDVIAFIGFAQLMIGRLDQISAFINQTVTARAKLEEFFQMEDATADRQEPENVADLNDVKGDIVFDNVTYEFPNSGQGVYDVSFEVKPGQTVAIVGPTGAGKTTLINLLQRVFDPAAGRIMIDGTDTRTVSRRSLRHAIATVFQDAGLFNRSVEDNIRVGRANATHEEVHAAAKAAAAHDFILAKSEGYDTFVGERGSQLSGGERQRLAIARAILKDSPILVLDEATSALDVETEEKVTQAVDELSHNRTTFIIAHRLSTVRSADLVLFMDKGHLVESGSFNELAERGGRFSDLLRAGGLKLEDKQPKQPVVEGSNVMPFPVKGAVA</sequence>
<organism>
    <name type="scientific">Brucella abortus (strain 2308)</name>
    <dbReference type="NCBI Taxonomy" id="359391"/>
    <lineage>
        <taxon>Bacteria</taxon>
        <taxon>Pseudomonadati</taxon>
        <taxon>Pseudomonadota</taxon>
        <taxon>Alphaproteobacteria</taxon>
        <taxon>Hyphomicrobiales</taxon>
        <taxon>Brucellaceae</taxon>
        <taxon>Brucella/Ochrobactrum group</taxon>
        <taxon>Brucella</taxon>
    </lineage>
</organism>